<gene>
    <name evidence="1" type="primary">rplD</name>
    <name type="ordered locus">CLH_0238</name>
</gene>
<organism>
    <name type="scientific">Clostridium botulinum (strain Alaska E43 / Type E3)</name>
    <dbReference type="NCBI Taxonomy" id="508767"/>
    <lineage>
        <taxon>Bacteria</taxon>
        <taxon>Bacillati</taxon>
        <taxon>Bacillota</taxon>
        <taxon>Clostridia</taxon>
        <taxon>Eubacteriales</taxon>
        <taxon>Clostridiaceae</taxon>
        <taxon>Clostridium</taxon>
    </lineage>
</organism>
<comment type="function">
    <text evidence="1">One of the primary rRNA binding proteins, this protein initially binds near the 5'-end of the 23S rRNA. It is important during the early stages of 50S assembly. It makes multiple contacts with different domains of the 23S rRNA in the assembled 50S subunit and ribosome.</text>
</comment>
<comment type="function">
    <text evidence="1">Forms part of the polypeptide exit tunnel.</text>
</comment>
<comment type="subunit">
    <text evidence="1">Part of the 50S ribosomal subunit.</text>
</comment>
<comment type="similarity">
    <text evidence="1">Belongs to the universal ribosomal protein uL4 family.</text>
</comment>
<dbReference type="EMBL" id="CP001078">
    <property type="protein sequence ID" value="ACD52715.1"/>
    <property type="molecule type" value="Genomic_DNA"/>
</dbReference>
<dbReference type="RefSeq" id="WP_003372477.1">
    <property type="nucleotide sequence ID" value="NC_010723.1"/>
</dbReference>
<dbReference type="SMR" id="B2UYB1"/>
<dbReference type="KEGG" id="cbt:CLH_0238"/>
<dbReference type="HOGENOM" id="CLU_041575_5_2_9"/>
<dbReference type="GO" id="GO:1990904">
    <property type="term" value="C:ribonucleoprotein complex"/>
    <property type="evidence" value="ECO:0007669"/>
    <property type="project" value="UniProtKB-KW"/>
</dbReference>
<dbReference type="GO" id="GO:0005840">
    <property type="term" value="C:ribosome"/>
    <property type="evidence" value="ECO:0007669"/>
    <property type="project" value="UniProtKB-KW"/>
</dbReference>
<dbReference type="GO" id="GO:0019843">
    <property type="term" value="F:rRNA binding"/>
    <property type="evidence" value="ECO:0007669"/>
    <property type="project" value="UniProtKB-UniRule"/>
</dbReference>
<dbReference type="GO" id="GO:0003735">
    <property type="term" value="F:structural constituent of ribosome"/>
    <property type="evidence" value="ECO:0007669"/>
    <property type="project" value="InterPro"/>
</dbReference>
<dbReference type="GO" id="GO:0006412">
    <property type="term" value="P:translation"/>
    <property type="evidence" value="ECO:0007669"/>
    <property type="project" value="UniProtKB-UniRule"/>
</dbReference>
<dbReference type="Gene3D" id="3.40.1370.10">
    <property type="match status" value="1"/>
</dbReference>
<dbReference type="HAMAP" id="MF_01328_B">
    <property type="entry name" value="Ribosomal_uL4_B"/>
    <property type="match status" value="1"/>
</dbReference>
<dbReference type="InterPro" id="IPR002136">
    <property type="entry name" value="Ribosomal_uL4"/>
</dbReference>
<dbReference type="InterPro" id="IPR013005">
    <property type="entry name" value="Ribosomal_uL4-like"/>
</dbReference>
<dbReference type="InterPro" id="IPR023574">
    <property type="entry name" value="Ribosomal_uL4_dom_sf"/>
</dbReference>
<dbReference type="NCBIfam" id="TIGR03953">
    <property type="entry name" value="rplD_bact"/>
    <property type="match status" value="1"/>
</dbReference>
<dbReference type="PANTHER" id="PTHR10746">
    <property type="entry name" value="50S RIBOSOMAL PROTEIN L4"/>
    <property type="match status" value="1"/>
</dbReference>
<dbReference type="PANTHER" id="PTHR10746:SF6">
    <property type="entry name" value="LARGE RIBOSOMAL SUBUNIT PROTEIN UL4M"/>
    <property type="match status" value="1"/>
</dbReference>
<dbReference type="Pfam" id="PF00573">
    <property type="entry name" value="Ribosomal_L4"/>
    <property type="match status" value="1"/>
</dbReference>
<dbReference type="SUPFAM" id="SSF52166">
    <property type="entry name" value="Ribosomal protein L4"/>
    <property type="match status" value="1"/>
</dbReference>
<evidence type="ECO:0000255" key="1">
    <source>
        <dbReference type="HAMAP-Rule" id="MF_01328"/>
    </source>
</evidence>
<evidence type="ECO:0000256" key="2">
    <source>
        <dbReference type="SAM" id="MobiDB-lite"/>
    </source>
</evidence>
<evidence type="ECO:0000305" key="3"/>
<name>RL4_CLOBA</name>
<keyword id="KW-0687">Ribonucleoprotein</keyword>
<keyword id="KW-0689">Ribosomal protein</keyword>
<keyword id="KW-0694">RNA-binding</keyword>
<keyword id="KW-0699">rRNA-binding</keyword>
<accession>B2UYB1</accession>
<reference key="1">
    <citation type="submission" date="2008-05" db="EMBL/GenBank/DDBJ databases">
        <title>Complete genome sequence of Clostridium botulinum E3 str. Alaska E43.</title>
        <authorList>
            <person name="Brinkac L.M."/>
            <person name="Brown J.L."/>
            <person name="Bruce D."/>
            <person name="Detter C."/>
            <person name="Munk C."/>
            <person name="Smith L.A."/>
            <person name="Smith T.J."/>
            <person name="Sutton G."/>
            <person name="Brettin T.S."/>
        </authorList>
    </citation>
    <scope>NUCLEOTIDE SEQUENCE [LARGE SCALE GENOMIC DNA]</scope>
    <source>
        <strain>Alaska E43 / Type E3</strain>
    </source>
</reference>
<feature type="chain" id="PRO_1000142104" description="Large ribosomal subunit protein uL4">
    <location>
        <begin position="1"/>
        <end position="206"/>
    </location>
</feature>
<feature type="region of interest" description="Disordered" evidence="2">
    <location>
        <begin position="49"/>
        <end position="76"/>
    </location>
</feature>
<sequence length="206" mass="22821">MPTVGLFNQEGKQVGDIQLNANVFEVEVNKHALHQVVVALLANKRQGTQSAKTRTEVRGGGIKPWRQKGTGRARQGSIRAPQWIKGGIVFAPKPRDYRVSIPKSMRRVAMKSALTSKVNDGQMVVLESLSFEAPKTKQFIEMLSAFNAKKTLIITAESNEAVYKSARNIQGVSVIPVNNINVYDLLKFEKLIITKDAVSKIEEVYA</sequence>
<proteinExistence type="inferred from homology"/>
<protein>
    <recommendedName>
        <fullName evidence="1">Large ribosomal subunit protein uL4</fullName>
    </recommendedName>
    <alternativeName>
        <fullName evidence="3">50S ribosomal protein L4</fullName>
    </alternativeName>
</protein>